<name>PHNW_BACCE</name>
<keyword id="KW-0032">Aminotransferase</keyword>
<keyword id="KW-0663">Pyridoxal phosphate</keyword>
<keyword id="KW-0670">Pyruvate</keyword>
<keyword id="KW-0808">Transferase</keyword>
<dbReference type="EC" id="2.6.1.37" evidence="1"/>
<dbReference type="EMBL" id="AY077635">
    <property type="protein sequence ID" value="AAL83669.1"/>
    <property type="status" value="ALT_FRAME"/>
    <property type="molecule type" value="Genomic_DNA"/>
</dbReference>
<dbReference type="SMR" id="Q8RLU1"/>
<dbReference type="eggNOG" id="COG0075">
    <property type="taxonomic scope" value="Bacteria"/>
</dbReference>
<dbReference type="GO" id="GO:0047304">
    <property type="term" value="F:2-aminoethylphosphonate-pyruvate transaminase activity"/>
    <property type="evidence" value="ECO:0007669"/>
    <property type="project" value="UniProtKB-EC"/>
</dbReference>
<dbReference type="GO" id="GO:0019700">
    <property type="term" value="P:organic phosphonate catabolic process"/>
    <property type="evidence" value="ECO:0007669"/>
    <property type="project" value="InterPro"/>
</dbReference>
<dbReference type="Gene3D" id="3.90.1150.10">
    <property type="entry name" value="Aspartate Aminotransferase, domain 1"/>
    <property type="match status" value="1"/>
</dbReference>
<dbReference type="Gene3D" id="3.40.640.10">
    <property type="entry name" value="Type I PLP-dependent aspartate aminotransferase-like (Major domain)"/>
    <property type="match status" value="1"/>
</dbReference>
<dbReference type="HAMAP" id="MF_01376">
    <property type="entry name" value="PhnW_aminotrans_5"/>
    <property type="match status" value="1"/>
</dbReference>
<dbReference type="InterPro" id="IPR000192">
    <property type="entry name" value="Aminotrans_V_dom"/>
</dbReference>
<dbReference type="InterPro" id="IPR012703">
    <property type="entry name" value="NH2EtPonate_pyrv_transaminase"/>
</dbReference>
<dbReference type="InterPro" id="IPR015424">
    <property type="entry name" value="PyrdxlP-dep_Trfase"/>
</dbReference>
<dbReference type="InterPro" id="IPR015421">
    <property type="entry name" value="PyrdxlP-dep_Trfase_major"/>
</dbReference>
<dbReference type="InterPro" id="IPR015422">
    <property type="entry name" value="PyrdxlP-dep_Trfase_small"/>
</dbReference>
<dbReference type="InterPro" id="IPR024169">
    <property type="entry name" value="SP_NH2Trfase/AEP_transaminase"/>
</dbReference>
<dbReference type="NCBIfam" id="TIGR03301">
    <property type="entry name" value="PhnW-AepZ"/>
    <property type="match status" value="1"/>
</dbReference>
<dbReference type="NCBIfam" id="NF010006">
    <property type="entry name" value="PRK13479.1"/>
    <property type="match status" value="1"/>
</dbReference>
<dbReference type="NCBIfam" id="TIGR02326">
    <property type="entry name" value="transamin_PhnW"/>
    <property type="match status" value="1"/>
</dbReference>
<dbReference type="PANTHER" id="PTHR42778">
    <property type="entry name" value="2-AMINOETHYLPHOSPHONATE--PYRUVATE TRANSAMINASE"/>
    <property type="match status" value="1"/>
</dbReference>
<dbReference type="PANTHER" id="PTHR42778:SF1">
    <property type="entry name" value="2-AMINOETHYLPHOSPHONATE--PYRUVATE TRANSAMINASE"/>
    <property type="match status" value="1"/>
</dbReference>
<dbReference type="Pfam" id="PF00266">
    <property type="entry name" value="Aminotran_5"/>
    <property type="match status" value="1"/>
</dbReference>
<dbReference type="PIRSF" id="PIRSF000524">
    <property type="entry name" value="SPT"/>
    <property type="match status" value="1"/>
</dbReference>
<dbReference type="SUPFAM" id="SSF53383">
    <property type="entry name" value="PLP-dependent transferases"/>
    <property type="match status" value="1"/>
</dbReference>
<evidence type="ECO:0000255" key="1">
    <source>
        <dbReference type="HAMAP-Rule" id="MF_01376"/>
    </source>
</evidence>
<evidence type="ECO:0000305" key="2"/>
<organism>
    <name type="scientific">Bacillus cereus</name>
    <dbReference type="NCBI Taxonomy" id="1396"/>
    <lineage>
        <taxon>Bacteria</taxon>
        <taxon>Bacillati</taxon>
        <taxon>Bacillota</taxon>
        <taxon>Bacilli</taxon>
        <taxon>Bacillales</taxon>
        <taxon>Bacillaceae</taxon>
        <taxon>Bacillus</taxon>
        <taxon>Bacillus cereus group</taxon>
    </lineage>
</organism>
<gene>
    <name evidence="1" type="primary">phnW</name>
</gene>
<reference key="1">
    <citation type="thesis" date="1996" institute="University of Maryland" country="United States">
        <title>Investigation of the enzymes of the 2-aminophosphonate degradation pathway of Salmonella typhimurium LT2 and Bacillus cereus AI-2.</title>
        <authorList>
            <person name="Baker A.S."/>
        </authorList>
    </citation>
    <scope>NUCLEOTIDE SEQUENCE [GENOMIC DNA]</scope>
    <source>
        <strain>ATCC 43881 / AI-2</strain>
    </source>
</reference>
<comment type="function">
    <text evidence="1">Involved in phosphonate degradation.</text>
</comment>
<comment type="catalytic activity">
    <reaction evidence="1">
        <text>(2-aminoethyl)phosphonate + pyruvate = phosphonoacetaldehyde + L-alanine</text>
        <dbReference type="Rhea" id="RHEA:17021"/>
        <dbReference type="ChEBI" id="CHEBI:15361"/>
        <dbReference type="ChEBI" id="CHEBI:57418"/>
        <dbReference type="ChEBI" id="CHEBI:57972"/>
        <dbReference type="ChEBI" id="CHEBI:58383"/>
        <dbReference type="EC" id="2.6.1.37"/>
    </reaction>
</comment>
<comment type="cofactor">
    <cofactor evidence="1">
        <name>pyridoxal 5'-phosphate</name>
        <dbReference type="ChEBI" id="CHEBI:597326"/>
    </cofactor>
</comment>
<comment type="subunit">
    <text evidence="1">Homodimer.</text>
</comment>
<comment type="similarity">
    <text evidence="1">Belongs to the class-V pyridoxal-phosphate-dependent aminotransferase family. PhnW subfamily.</text>
</comment>
<comment type="caution">
    <text evidence="2">Upon comparison to orthologs, this is probably a fragment.</text>
</comment>
<comment type="sequence caution" evidence="2">
    <conflict type="frameshift">
        <sequence resource="EMBL-CDS" id="AAL83669"/>
    </conflict>
</comment>
<protein>
    <recommendedName>
        <fullName evidence="1">2-aminoethylphosphonate--pyruvate transaminase</fullName>
        <ecNumber evidence="1">2.6.1.37</ecNumber>
    </recommendedName>
    <alternativeName>
        <fullName evidence="1">2-aminoethylphosphonate aminotransferase</fullName>
    </alternativeName>
    <alternativeName>
        <fullName evidence="1">AEP transaminase</fullName>
        <shortName evidence="1">AEPT</shortName>
    </alternativeName>
</protein>
<proteinExistence type="inferred from homology"/>
<accession>Q8RLU1</accession>
<sequence>MTENHYLLLTPGPLTTTKSVKEVMIYDWCTWDDEYNTMVQEVRAKLVSLATKEEEKYTTVLMQGSGTFSVEAVIGSVIPANGKILVCTNGAYGKRIVQMAEMLQIDVVVSQTEEWEPTNIVEVEKLLQEDKEITHIAVVHCETTTGIINPIVDVCKLGKQYGKVTIVDAMSSFGGIEIDIADLQIDFLISSANKCIQGVPGFGFVIAKRDELLKCKGQGRSLSLDLYDQWETMEKQNGKWRFTSPTHVVHAFYQALLELQKEGGVRARYNRYYNNQKLLVNRMGEIGFKPLVDEEYQAPIITSFIYPKQGFEFQQLYNELKRYGFVIYPGKISKVDTFGIGNIG</sequence>
<feature type="chain" id="PRO_0000286753" description="2-aminoethylphosphonate--pyruvate transaminase">
    <location>
        <begin position="1"/>
        <end position="344"/>
    </location>
</feature>
<feature type="modified residue" description="N6-(pyridoxal phosphate)lysine" evidence="1">
    <location>
        <position position="194"/>
    </location>
</feature>
<feature type="non-terminal residue">
    <location>
        <position position="344"/>
    </location>
</feature>